<accession>P52173</accession>
<accession>A9QWQ8</accession>
<reference key="1">
    <citation type="journal article" date="1996" name="Gene">
        <title>The nucleotide sequence of the bovine interleukin-5-encoding cDNA.</title>
        <authorList>
            <person name="Mertens B."/>
            <person name="Gobright E."/>
            <person name="Seow H.F."/>
        </authorList>
    </citation>
    <scope>NUCLEOTIDE SEQUENCE [MRNA]</scope>
    <source>
        <tissue>Blood</tissue>
    </source>
</reference>
<reference key="2">
    <citation type="submission" date="2007-11" db="EMBL/GenBank/DDBJ databases">
        <title>U.S. veterinary immune reagent network: expressed bovine gene sequences.</title>
        <authorList>
            <consortium name="U.S. Veterinary Immune Reagent Network"/>
            <person name="Hudgens T."/>
            <person name="Tompkins D."/>
            <person name="Baldwin C.L."/>
        </authorList>
    </citation>
    <scope>NUCLEOTIDE SEQUENCE [LARGE SCALE MRNA]</scope>
    <source>
        <strain>Belted Galloway</strain>
        <tissue>Peripheral blood</tissue>
    </source>
</reference>
<sequence>MRMHLHLTLVALGAAYVCANAVESTMNRLVAETLTLLSSHRTLLIGDGNLMIPTPQHTNHQLCIEEVFQGIDTLKNQTAQGDAVKKIFQNLSLIKEYIDLQKRKCGGERWRVKQFLDYLQVFLGVINTEWTMES</sequence>
<feature type="signal peptide" evidence="1">
    <location>
        <begin position="1"/>
        <end position="21"/>
    </location>
</feature>
<feature type="chain" id="PRO_0000015554" description="Interleukin-5">
    <location>
        <begin position="22"/>
        <end position="134"/>
    </location>
</feature>
<feature type="glycosylation site" description="N-linked (GlcNAc...) asparagine" evidence="4">
    <location>
        <position position="76"/>
    </location>
</feature>
<feature type="glycosylation site" description="N-linked (GlcNAc...) asparagine" evidence="4">
    <location>
        <position position="90"/>
    </location>
</feature>
<feature type="disulfide bond" description="Interchain (with C-105)" evidence="1">
    <location>
        <position position="63"/>
    </location>
</feature>
<feature type="disulfide bond" description="Interchain (with C-63)" evidence="1">
    <location>
        <position position="105"/>
    </location>
</feature>
<dbReference type="EMBL" id="Z67872">
    <property type="protein sequence ID" value="CAA91779.1"/>
    <property type="molecule type" value="mRNA"/>
</dbReference>
<dbReference type="EMBL" id="EU276070">
    <property type="protein sequence ID" value="ABX72068.1"/>
    <property type="molecule type" value="mRNA"/>
</dbReference>
<dbReference type="PIR" id="JC5116">
    <property type="entry name" value="JC5116"/>
</dbReference>
<dbReference type="RefSeq" id="NP_776347.1">
    <property type="nucleotide sequence ID" value="NM_173922.1"/>
</dbReference>
<dbReference type="SMR" id="P52173"/>
<dbReference type="FunCoup" id="P52173">
    <property type="interactions" value="168"/>
</dbReference>
<dbReference type="STRING" id="9913.ENSBTAP00000041739"/>
<dbReference type="GlyCosmos" id="P52173">
    <property type="glycosylation" value="2 sites, No reported glycans"/>
</dbReference>
<dbReference type="GlyGen" id="P52173">
    <property type="glycosylation" value="2 sites"/>
</dbReference>
<dbReference type="PaxDb" id="9913-ENSBTAP00000041739"/>
<dbReference type="Ensembl" id="ENSBTAT00000044228.2">
    <property type="protein sequence ID" value="ENSBTAP00000041739.1"/>
    <property type="gene ID" value="ENSBTAG00000031235.3"/>
</dbReference>
<dbReference type="GeneID" id="280825"/>
<dbReference type="KEGG" id="bta:280825"/>
<dbReference type="CTD" id="3567"/>
<dbReference type="VEuPathDB" id="HostDB:ENSBTAG00000031235"/>
<dbReference type="VGNC" id="VGNC:30164">
    <property type="gene designation" value="IL5"/>
</dbReference>
<dbReference type="eggNOG" id="ENOG502RWD8">
    <property type="taxonomic scope" value="Eukaryota"/>
</dbReference>
<dbReference type="GeneTree" id="ENSGT00390000016991"/>
<dbReference type="HOGENOM" id="CLU_156269_0_0_1"/>
<dbReference type="InParanoid" id="P52173"/>
<dbReference type="OMA" id="VPTHKNH"/>
<dbReference type="OrthoDB" id="9446172at2759"/>
<dbReference type="TreeFam" id="TF338422"/>
<dbReference type="Reactome" id="R-BTA-512988">
    <property type="pathway name" value="Interleukin-3, Interleukin-5 and GM-CSF signaling"/>
</dbReference>
<dbReference type="Reactome" id="R-BTA-5673001">
    <property type="pathway name" value="RAF/MAP kinase cascade"/>
</dbReference>
<dbReference type="Reactome" id="R-BTA-912526">
    <property type="pathway name" value="Interleukin receptor SHC signaling"/>
</dbReference>
<dbReference type="Proteomes" id="UP000009136">
    <property type="component" value="Chromosome 7"/>
</dbReference>
<dbReference type="Bgee" id="ENSBTAG00000031235">
    <property type="expression patterns" value="Expressed in midbrain and 19 other cell types or tissues"/>
</dbReference>
<dbReference type="GO" id="GO:0005615">
    <property type="term" value="C:extracellular space"/>
    <property type="evidence" value="ECO:0000318"/>
    <property type="project" value="GO_Central"/>
</dbReference>
<dbReference type="GO" id="GO:0005125">
    <property type="term" value="F:cytokine activity"/>
    <property type="evidence" value="ECO:0000318"/>
    <property type="project" value="GO_Central"/>
</dbReference>
<dbReference type="GO" id="GO:0008083">
    <property type="term" value="F:growth factor activity"/>
    <property type="evidence" value="ECO:0007669"/>
    <property type="project" value="UniProtKB-KW"/>
</dbReference>
<dbReference type="GO" id="GO:0005137">
    <property type="term" value="F:interleukin-5 receptor binding"/>
    <property type="evidence" value="ECO:0007669"/>
    <property type="project" value="InterPro"/>
</dbReference>
<dbReference type="GO" id="GO:0006955">
    <property type="term" value="P:immune response"/>
    <property type="evidence" value="ECO:0007669"/>
    <property type="project" value="InterPro"/>
</dbReference>
<dbReference type="GO" id="GO:0038043">
    <property type="term" value="P:interleukin-5-mediated signaling pathway"/>
    <property type="evidence" value="ECO:0000318"/>
    <property type="project" value="GO_Central"/>
</dbReference>
<dbReference type="GO" id="GO:0045893">
    <property type="term" value="P:positive regulation of DNA-templated transcription"/>
    <property type="evidence" value="ECO:0007669"/>
    <property type="project" value="Ensembl"/>
</dbReference>
<dbReference type="GO" id="GO:0002639">
    <property type="term" value="P:positive regulation of immunoglobulin production"/>
    <property type="evidence" value="ECO:0007669"/>
    <property type="project" value="Ensembl"/>
</dbReference>
<dbReference type="GO" id="GO:0071803">
    <property type="term" value="P:positive regulation of podosome assembly"/>
    <property type="evidence" value="ECO:0007669"/>
    <property type="project" value="Ensembl"/>
</dbReference>
<dbReference type="Gene3D" id="1.20.1250.10">
    <property type="match status" value="1"/>
</dbReference>
<dbReference type="InterPro" id="IPR009079">
    <property type="entry name" value="4_helix_cytokine-like_core"/>
</dbReference>
<dbReference type="InterPro" id="IPR000186">
    <property type="entry name" value="IL-5"/>
</dbReference>
<dbReference type="PANTHER" id="PTHR48491">
    <property type="entry name" value="INTERLEUKIN-5"/>
    <property type="match status" value="1"/>
</dbReference>
<dbReference type="PANTHER" id="PTHR48491:SF1">
    <property type="entry name" value="INTERLEUKIN-5"/>
    <property type="match status" value="1"/>
</dbReference>
<dbReference type="Pfam" id="PF02025">
    <property type="entry name" value="IL5"/>
    <property type="match status" value="1"/>
</dbReference>
<dbReference type="PRINTS" id="PR00432">
    <property type="entry name" value="INTERLEUKIN5"/>
</dbReference>
<dbReference type="SUPFAM" id="SSF47266">
    <property type="entry name" value="4-helical cytokines"/>
    <property type="match status" value="1"/>
</dbReference>
<name>IL5_BOVIN</name>
<protein>
    <recommendedName>
        <fullName>Interleukin-5</fullName>
        <shortName>IL-5</shortName>
    </recommendedName>
    <alternativeName>
        <fullName>Eosinophil differentiation factor</fullName>
    </alternativeName>
    <alternativeName>
        <fullName>T-cell replacing factor</fullName>
        <shortName>TRF</shortName>
    </alternativeName>
</protein>
<gene>
    <name type="primary">IL5</name>
</gene>
<comment type="function">
    <text evidence="2 3">Homodimeric cytokine expressed predominantly by T-lymphocytes and NK cells that plays an important role in the survival, differentiation, and chemotaxis of eosinophils. Also acts on activated and resting B-cells to induce immunoglobulin production, growth, and differentiation (By similarity). Mechanistically, exerts its biological effects through a receptor composed of IL5RA subunit and the cytokine receptor common subunit beta/CSF2RB. Binding to the receptor leads to activation of various kinases including LYN, SYK and JAK2 and thereby propagates signals through the RAS-MAPK and JAK-STAT5 pathways respectively (By similarity).</text>
</comment>
<comment type="subunit">
    <text evidence="2 3">Homodimer; disulfide-linked. Interacts with IL5RA. Interacts with CSF2RB.</text>
</comment>
<comment type="subcellular location">
    <subcellularLocation>
        <location evidence="2">Secreted</location>
    </subcellularLocation>
</comment>
<comment type="similarity">
    <text evidence="5">Belongs to the IL-5 family.</text>
</comment>
<evidence type="ECO:0000250" key="1"/>
<evidence type="ECO:0000250" key="2">
    <source>
        <dbReference type="UniProtKB" id="P04401"/>
    </source>
</evidence>
<evidence type="ECO:0000250" key="3">
    <source>
        <dbReference type="UniProtKB" id="P05113"/>
    </source>
</evidence>
<evidence type="ECO:0000255" key="4"/>
<evidence type="ECO:0000305" key="5"/>
<proteinExistence type="evidence at transcript level"/>
<organism>
    <name type="scientific">Bos taurus</name>
    <name type="common">Bovine</name>
    <dbReference type="NCBI Taxonomy" id="9913"/>
    <lineage>
        <taxon>Eukaryota</taxon>
        <taxon>Metazoa</taxon>
        <taxon>Chordata</taxon>
        <taxon>Craniata</taxon>
        <taxon>Vertebrata</taxon>
        <taxon>Euteleostomi</taxon>
        <taxon>Mammalia</taxon>
        <taxon>Eutheria</taxon>
        <taxon>Laurasiatheria</taxon>
        <taxon>Artiodactyla</taxon>
        <taxon>Ruminantia</taxon>
        <taxon>Pecora</taxon>
        <taxon>Bovidae</taxon>
        <taxon>Bovinae</taxon>
        <taxon>Bos</taxon>
    </lineage>
</organism>
<keyword id="KW-0202">Cytokine</keyword>
<keyword id="KW-1015">Disulfide bond</keyword>
<keyword id="KW-0325">Glycoprotein</keyword>
<keyword id="KW-0339">Growth factor</keyword>
<keyword id="KW-1185">Reference proteome</keyword>
<keyword id="KW-0964">Secreted</keyword>
<keyword id="KW-0732">Signal</keyword>